<gene>
    <name type="primary">aida</name>
    <name type="ORF">zgc:73327</name>
</gene>
<name>AIDA_DANRE</name>
<reference key="1">
    <citation type="journal article" date="2004" name="Proc. Natl. Acad. Sci. U.S.A.">
        <title>Hematopoietic gene expression profile in zebrafish kidney marrow.</title>
        <authorList>
            <person name="Song H.-D."/>
            <person name="Sun X.-J."/>
            <person name="Deng M."/>
            <person name="Zhang G.-W."/>
            <person name="Zhou Y."/>
            <person name="Wu X.-Y."/>
            <person name="Sheng Y."/>
            <person name="Chen Y."/>
            <person name="Ruan Z."/>
            <person name="Jiang C.-L."/>
            <person name="Fan H.-Y."/>
            <person name="Zon L.I."/>
            <person name="Kanki J.P."/>
            <person name="Liu T.X."/>
            <person name="Look A.T."/>
            <person name="Chen Z."/>
        </authorList>
    </citation>
    <scope>NUCLEOTIDE SEQUENCE [LARGE SCALE MRNA]</scope>
    <source>
        <tissue>Kidney marrow</tissue>
    </source>
</reference>
<reference key="2">
    <citation type="journal article" date="2013" name="Nature">
        <title>The zebrafish reference genome sequence and its relationship to the human genome.</title>
        <authorList>
            <person name="Howe K."/>
            <person name="Clark M.D."/>
            <person name="Torroja C.F."/>
            <person name="Torrance J."/>
            <person name="Berthelot C."/>
            <person name="Muffato M."/>
            <person name="Collins J.E."/>
            <person name="Humphray S."/>
            <person name="McLaren K."/>
            <person name="Matthews L."/>
            <person name="McLaren S."/>
            <person name="Sealy I."/>
            <person name="Caccamo M."/>
            <person name="Churcher C."/>
            <person name="Scott C."/>
            <person name="Barrett J.C."/>
            <person name="Koch R."/>
            <person name="Rauch G.J."/>
            <person name="White S."/>
            <person name="Chow W."/>
            <person name="Kilian B."/>
            <person name="Quintais L.T."/>
            <person name="Guerra-Assuncao J.A."/>
            <person name="Zhou Y."/>
            <person name="Gu Y."/>
            <person name="Yen J."/>
            <person name="Vogel J.H."/>
            <person name="Eyre T."/>
            <person name="Redmond S."/>
            <person name="Banerjee R."/>
            <person name="Chi J."/>
            <person name="Fu B."/>
            <person name="Langley E."/>
            <person name="Maguire S.F."/>
            <person name="Laird G.K."/>
            <person name="Lloyd D."/>
            <person name="Kenyon E."/>
            <person name="Donaldson S."/>
            <person name="Sehra H."/>
            <person name="Almeida-King J."/>
            <person name="Loveland J."/>
            <person name="Trevanion S."/>
            <person name="Jones M."/>
            <person name="Quail M."/>
            <person name="Willey D."/>
            <person name="Hunt A."/>
            <person name="Burton J."/>
            <person name="Sims S."/>
            <person name="McLay K."/>
            <person name="Plumb B."/>
            <person name="Davis J."/>
            <person name="Clee C."/>
            <person name="Oliver K."/>
            <person name="Clark R."/>
            <person name="Riddle C."/>
            <person name="Elliot D."/>
            <person name="Threadgold G."/>
            <person name="Harden G."/>
            <person name="Ware D."/>
            <person name="Begum S."/>
            <person name="Mortimore B."/>
            <person name="Kerry G."/>
            <person name="Heath P."/>
            <person name="Phillimore B."/>
            <person name="Tracey A."/>
            <person name="Corby N."/>
            <person name="Dunn M."/>
            <person name="Johnson C."/>
            <person name="Wood J."/>
            <person name="Clark S."/>
            <person name="Pelan S."/>
            <person name="Griffiths G."/>
            <person name="Smith M."/>
            <person name="Glithero R."/>
            <person name="Howden P."/>
            <person name="Barker N."/>
            <person name="Lloyd C."/>
            <person name="Stevens C."/>
            <person name="Harley J."/>
            <person name="Holt K."/>
            <person name="Panagiotidis G."/>
            <person name="Lovell J."/>
            <person name="Beasley H."/>
            <person name="Henderson C."/>
            <person name="Gordon D."/>
            <person name="Auger K."/>
            <person name="Wright D."/>
            <person name="Collins J."/>
            <person name="Raisen C."/>
            <person name="Dyer L."/>
            <person name="Leung K."/>
            <person name="Robertson L."/>
            <person name="Ambridge K."/>
            <person name="Leongamornlert D."/>
            <person name="McGuire S."/>
            <person name="Gilderthorp R."/>
            <person name="Griffiths C."/>
            <person name="Manthravadi D."/>
            <person name="Nichol S."/>
            <person name="Barker G."/>
            <person name="Whitehead S."/>
            <person name="Kay M."/>
            <person name="Brown J."/>
            <person name="Murnane C."/>
            <person name="Gray E."/>
            <person name="Humphries M."/>
            <person name="Sycamore N."/>
            <person name="Barker D."/>
            <person name="Saunders D."/>
            <person name="Wallis J."/>
            <person name="Babbage A."/>
            <person name="Hammond S."/>
            <person name="Mashreghi-Mohammadi M."/>
            <person name="Barr L."/>
            <person name="Martin S."/>
            <person name="Wray P."/>
            <person name="Ellington A."/>
            <person name="Matthews N."/>
            <person name="Ellwood M."/>
            <person name="Woodmansey R."/>
            <person name="Clark G."/>
            <person name="Cooper J."/>
            <person name="Tromans A."/>
            <person name="Grafham D."/>
            <person name="Skuce C."/>
            <person name="Pandian R."/>
            <person name="Andrews R."/>
            <person name="Harrison E."/>
            <person name="Kimberley A."/>
            <person name="Garnett J."/>
            <person name="Fosker N."/>
            <person name="Hall R."/>
            <person name="Garner P."/>
            <person name="Kelly D."/>
            <person name="Bird C."/>
            <person name="Palmer S."/>
            <person name="Gehring I."/>
            <person name="Berger A."/>
            <person name="Dooley C.M."/>
            <person name="Ersan-Urun Z."/>
            <person name="Eser C."/>
            <person name="Geiger H."/>
            <person name="Geisler M."/>
            <person name="Karotki L."/>
            <person name="Kirn A."/>
            <person name="Konantz J."/>
            <person name="Konantz M."/>
            <person name="Oberlander M."/>
            <person name="Rudolph-Geiger S."/>
            <person name="Teucke M."/>
            <person name="Lanz C."/>
            <person name="Raddatz G."/>
            <person name="Osoegawa K."/>
            <person name="Zhu B."/>
            <person name="Rapp A."/>
            <person name="Widaa S."/>
            <person name="Langford C."/>
            <person name="Yang F."/>
            <person name="Schuster S.C."/>
            <person name="Carter N.P."/>
            <person name="Harrow J."/>
            <person name="Ning Z."/>
            <person name="Herrero J."/>
            <person name="Searle S.M."/>
            <person name="Enright A."/>
            <person name="Geisler R."/>
            <person name="Plasterk R.H."/>
            <person name="Lee C."/>
            <person name="Westerfield M."/>
            <person name="de Jong P.J."/>
            <person name="Zon L.I."/>
            <person name="Postlethwait J.H."/>
            <person name="Nusslein-Volhard C."/>
            <person name="Hubbard T.J."/>
            <person name="Roest Crollius H."/>
            <person name="Rogers J."/>
            <person name="Stemple D.L."/>
        </authorList>
    </citation>
    <scope>NUCLEOTIDE SEQUENCE [LARGE SCALE GENOMIC DNA]</scope>
    <source>
        <strain>Tuebingen</strain>
    </source>
</reference>
<reference key="3">
    <citation type="submission" date="2003-10" db="EMBL/GenBank/DDBJ databases">
        <authorList>
            <consortium name="NIH - Zebrafish Gene Collection (ZGC) project"/>
        </authorList>
    </citation>
    <scope>NUCLEOTIDE SEQUENCE [LARGE SCALE MRNA]</scope>
    <source>
        <tissue>Retina</tissue>
    </source>
</reference>
<reference key="4">
    <citation type="journal article" date="2007" name="Dev. Cell">
        <title>A beta-catenin-independent dorsalization pathway activated by Axin/JNK signaling and antagonized by aida.</title>
        <authorList>
            <person name="Rui Y."/>
            <person name="Xu Z."/>
            <person name="Xiong B."/>
            <person name="Cao Y."/>
            <person name="Lin S."/>
            <person name="Zhang M."/>
            <person name="Chan S.-C."/>
            <person name="Luo W."/>
            <person name="Han Y."/>
            <person name="Lu Z."/>
            <person name="Ye Z."/>
            <person name="Zhou H.-M."/>
            <person name="Han J."/>
            <person name="Meng A."/>
            <person name="Lin S.-C."/>
        </authorList>
    </citation>
    <scope>FUNCTION</scope>
    <scope>TISSUE SPECIFICITY</scope>
    <scope>DEVELOPMENTAL STAGE</scope>
</reference>
<comment type="function">
    <text evidence="5">Acts as a ventralizing factor during embryogenesis. Inhibits axin-mediated JNK activation by binding axin and disrupting axin homodimerization. This in turn antagonizes a Wnt/beta-catenin-independent dorsalization pathway activated by axin/JNK-signaling.</text>
</comment>
<comment type="tissue specificity">
    <text evidence="5">At 24 hours post-fertilization, expressed in most tissues, with strongest expression in the brain and somites.</text>
</comment>
<comment type="developmental stage">
    <text evidence="5">Expressed both maternally and zygotically.</text>
</comment>
<comment type="similarity">
    <text evidence="3 6">Belongs to the AIDA family.</text>
</comment>
<feature type="chain" id="PRO_0000305281" description="Axin interactor, dorsalization-associated protein">
    <location>
        <begin position="1"/>
        <end position="303"/>
    </location>
</feature>
<feature type="domain" description="C2 Aida-type" evidence="3">
    <location>
        <begin position="154"/>
        <end position="301"/>
    </location>
</feature>
<feature type="region of interest" description="Disordered" evidence="4">
    <location>
        <begin position="133"/>
        <end position="156"/>
    </location>
</feature>
<feature type="region of interest" description="Axin-binding" evidence="1">
    <location>
        <begin position="151"/>
        <end position="218"/>
    </location>
</feature>
<feature type="coiled-coil region" evidence="2">
    <location>
        <begin position="25"/>
        <end position="51"/>
    </location>
</feature>
<feature type="compositionally biased region" description="Low complexity" evidence="4">
    <location>
        <begin position="147"/>
        <end position="156"/>
    </location>
</feature>
<feature type="strand" evidence="7">
    <location>
        <begin position="165"/>
        <end position="174"/>
    </location>
</feature>
<feature type="helix" evidence="7">
    <location>
        <begin position="178"/>
        <end position="180"/>
    </location>
</feature>
<feature type="strand" evidence="7">
    <location>
        <begin position="182"/>
        <end position="191"/>
    </location>
</feature>
<feature type="strand" evidence="7">
    <location>
        <begin position="197"/>
        <end position="199"/>
    </location>
</feature>
<feature type="strand" evidence="7">
    <location>
        <begin position="212"/>
        <end position="222"/>
    </location>
</feature>
<feature type="helix" evidence="7">
    <location>
        <begin position="227"/>
        <end position="229"/>
    </location>
</feature>
<feature type="strand" evidence="7">
    <location>
        <begin position="235"/>
        <end position="243"/>
    </location>
</feature>
<feature type="turn" evidence="7">
    <location>
        <begin position="245"/>
        <end position="247"/>
    </location>
</feature>
<feature type="strand" evidence="7">
    <location>
        <begin position="249"/>
        <end position="259"/>
    </location>
</feature>
<feature type="helix" evidence="7">
    <location>
        <begin position="260"/>
        <end position="262"/>
    </location>
</feature>
<feature type="strand" evidence="7">
    <location>
        <begin position="265"/>
        <end position="270"/>
    </location>
</feature>
<feature type="strand" evidence="7">
    <location>
        <begin position="273"/>
        <end position="276"/>
    </location>
</feature>
<feature type="strand" evidence="7">
    <location>
        <begin position="289"/>
        <end position="291"/>
    </location>
</feature>
<feature type="strand" evidence="7">
    <location>
        <begin position="294"/>
        <end position="301"/>
    </location>
</feature>
<protein>
    <recommendedName>
        <fullName>Axin interactor, dorsalization-associated protein</fullName>
    </recommendedName>
    <alternativeName>
        <fullName>Axin interaction partner and dorsalization antagonist</fullName>
    </alternativeName>
</protein>
<sequence length="303" mass="34560">MSDVNKTVQKWHASFKKGTDFDSWGQLVEAIDEYQILARQLQKEVQSSNSHDFTEEQKKTLGKFATCLEMRSAALQCTQSQEEFKLEDLKKLEPIIKNILTYNKDFPFDVQPVPLRKILAPGEEENLDVEEDLDAGTGAGSTPSFTSRLPGSLLPRLPSEPGMTLLTLTIEKIGLKDAGQCIDPYITVSVKDLNGIDLNPVQDTPVATRKEDTYIHFSVDVEIQRHLEKLPKGAAIFFEFKHYKPKKRFTSTKCFAFMEMDEIKPGPIVIELYKKPTDFKRKKLNLLTKKPLYLHLNQTLHKD</sequence>
<dbReference type="EMBL" id="AY398347">
    <property type="protein sequence ID" value="AAQ97780.1"/>
    <property type="molecule type" value="mRNA"/>
</dbReference>
<dbReference type="EMBL" id="BX936461">
    <property type="protein sequence ID" value="CAM56324.1"/>
    <property type="molecule type" value="Genomic_DNA"/>
</dbReference>
<dbReference type="EMBL" id="BC059647">
    <property type="protein sequence ID" value="AAH59647.1"/>
    <property type="molecule type" value="mRNA"/>
</dbReference>
<dbReference type="RefSeq" id="NP_957084.1">
    <property type="nucleotide sequence ID" value="NM_200790.2"/>
</dbReference>
<dbReference type="PDB" id="2QZQ">
    <property type="method" value="X-ray"/>
    <property type="resolution" value="1.90 A"/>
    <property type="chains" value="A=151-302"/>
</dbReference>
<dbReference type="PDBsum" id="2QZQ"/>
<dbReference type="SMR" id="Q6PBN2"/>
<dbReference type="FunCoup" id="Q6PBN2">
    <property type="interactions" value="775"/>
</dbReference>
<dbReference type="STRING" id="7955.ENSDARP00000026849"/>
<dbReference type="PaxDb" id="7955-ENSDARP00000026849"/>
<dbReference type="Ensembl" id="ENSDART00000010271">
    <property type="protein sequence ID" value="ENSDARP00000026849"/>
    <property type="gene ID" value="ENSDARG00000014532"/>
</dbReference>
<dbReference type="GeneID" id="393763"/>
<dbReference type="KEGG" id="dre:393763"/>
<dbReference type="AGR" id="ZFIN:ZDB-GENE-071126-2"/>
<dbReference type="CTD" id="64853"/>
<dbReference type="ZFIN" id="ZDB-GENE-071126-2">
    <property type="gene designation" value="aida"/>
</dbReference>
<dbReference type="eggNOG" id="ENOG502QSD5">
    <property type="taxonomic scope" value="Eukaryota"/>
</dbReference>
<dbReference type="HOGENOM" id="CLU_064322_0_0_1"/>
<dbReference type="InParanoid" id="Q6PBN2"/>
<dbReference type="OMA" id="KLHAAWC"/>
<dbReference type="OrthoDB" id="428576at2759"/>
<dbReference type="PhylomeDB" id="Q6PBN2"/>
<dbReference type="TreeFam" id="TF328541"/>
<dbReference type="EvolutionaryTrace" id="Q6PBN2"/>
<dbReference type="PRO" id="PR:Q6PBN2"/>
<dbReference type="Proteomes" id="UP000000437">
    <property type="component" value="Chromosome 20"/>
</dbReference>
<dbReference type="Bgee" id="ENSDARG00000014532">
    <property type="expression patterns" value="Expressed in early embryo and 22 other cell types or tissues"/>
</dbReference>
<dbReference type="GO" id="GO:0016020">
    <property type="term" value="C:membrane"/>
    <property type="evidence" value="ECO:0000314"/>
    <property type="project" value="ZFIN"/>
</dbReference>
<dbReference type="GO" id="GO:0035091">
    <property type="term" value="F:phosphatidylinositol binding"/>
    <property type="evidence" value="ECO:0000314"/>
    <property type="project" value="ZFIN"/>
</dbReference>
<dbReference type="GO" id="GO:0048264">
    <property type="term" value="P:determination of ventral identity"/>
    <property type="evidence" value="ECO:0000314"/>
    <property type="project" value="MGI"/>
</dbReference>
<dbReference type="GO" id="GO:0009953">
    <property type="term" value="P:dorsal/ventral pattern formation"/>
    <property type="evidence" value="ECO:0000314"/>
    <property type="project" value="MGI"/>
</dbReference>
<dbReference type="GO" id="GO:2000016">
    <property type="term" value="P:negative regulation of determination of dorsal identity"/>
    <property type="evidence" value="ECO:0000314"/>
    <property type="project" value="MGI"/>
</dbReference>
<dbReference type="GO" id="GO:0046329">
    <property type="term" value="P:negative regulation of JNK cascade"/>
    <property type="evidence" value="ECO:0000314"/>
    <property type="project" value="MGI"/>
</dbReference>
<dbReference type="GO" id="GO:0043508">
    <property type="term" value="P:negative regulation of JUN kinase activity"/>
    <property type="evidence" value="ECO:0000314"/>
    <property type="project" value="MGI"/>
</dbReference>
<dbReference type="GO" id="GO:0031333">
    <property type="term" value="P:negative regulation of protein-containing complex assembly"/>
    <property type="evidence" value="ECO:0000250"/>
    <property type="project" value="UniProtKB"/>
</dbReference>
<dbReference type="FunFam" id="1.20.120.360:FF:000001">
    <property type="entry name" value="Axin interactor, dorsalization-associated protein"/>
    <property type="match status" value="1"/>
</dbReference>
<dbReference type="FunFam" id="2.60.40.150:FF:000059">
    <property type="entry name" value="Axin interactor, dorsalization-associated protein"/>
    <property type="match status" value="1"/>
</dbReference>
<dbReference type="Gene3D" id="1.20.120.360">
    <property type="entry name" value="Axin interactor, dorsalization-associated protein, N-terminal domain"/>
    <property type="match status" value="1"/>
</dbReference>
<dbReference type="Gene3D" id="2.60.40.150">
    <property type="entry name" value="C2 domain"/>
    <property type="match status" value="1"/>
</dbReference>
<dbReference type="InterPro" id="IPR025939">
    <property type="entry name" value="Aida_C"/>
</dbReference>
<dbReference type="InterPro" id="IPR023421">
    <property type="entry name" value="AIDA_N"/>
</dbReference>
<dbReference type="InterPro" id="IPR036818">
    <property type="entry name" value="AIDA_N_sf"/>
</dbReference>
<dbReference type="InterPro" id="IPR035892">
    <property type="entry name" value="C2_domain_sf"/>
</dbReference>
<dbReference type="PANTHER" id="PTHR28654">
    <property type="entry name" value="AXIN INTERACTOR, DORSALIZATION-ASSOCIATED PROTEIN"/>
    <property type="match status" value="1"/>
</dbReference>
<dbReference type="PANTHER" id="PTHR28654:SF1">
    <property type="entry name" value="AXIN INTERACTOR, DORSALIZATION-ASSOCIATED PROTEIN"/>
    <property type="match status" value="1"/>
</dbReference>
<dbReference type="Pfam" id="PF14186">
    <property type="entry name" value="Aida_C2"/>
    <property type="match status" value="1"/>
</dbReference>
<dbReference type="Pfam" id="PF08910">
    <property type="entry name" value="Aida_N"/>
    <property type="match status" value="1"/>
</dbReference>
<dbReference type="SUPFAM" id="SSF109779">
    <property type="entry name" value="Domain from hypothetical 2610208m17rik protein"/>
    <property type="match status" value="1"/>
</dbReference>
<dbReference type="PROSITE" id="PS51911">
    <property type="entry name" value="C2_AIDA"/>
    <property type="match status" value="1"/>
</dbReference>
<accession>Q6PBN2</accession>
<organism>
    <name type="scientific">Danio rerio</name>
    <name type="common">Zebrafish</name>
    <name type="synonym">Brachydanio rerio</name>
    <dbReference type="NCBI Taxonomy" id="7955"/>
    <lineage>
        <taxon>Eukaryota</taxon>
        <taxon>Metazoa</taxon>
        <taxon>Chordata</taxon>
        <taxon>Craniata</taxon>
        <taxon>Vertebrata</taxon>
        <taxon>Euteleostomi</taxon>
        <taxon>Actinopterygii</taxon>
        <taxon>Neopterygii</taxon>
        <taxon>Teleostei</taxon>
        <taxon>Ostariophysi</taxon>
        <taxon>Cypriniformes</taxon>
        <taxon>Danionidae</taxon>
        <taxon>Danioninae</taxon>
        <taxon>Danio</taxon>
    </lineage>
</organism>
<proteinExistence type="evidence at protein level"/>
<evidence type="ECO:0000250" key="1"/>
<evidence type="ECO:0000255" key="2"/>
<evidence type="ECO:0000255" key="3">
    <source>
        <dbReference type="PROSITE-ProRule" id="PRU01259"/>
    </source>
</evidence>
<evidence type="ECO:0000256" key="4">
    <source>
        <dbReference type="SAM" id="MobiDB-lite"/>
    </source>
</evidence>
<evidence type="ECO:0000269" key="5">
    <source>
    </source>
</evidence>
<evidence type="ECO:0000305" key="6"/>
<evidence type="ECO:0007829" key="7">
    <source>
        <dbReference type="PDB" id="2QZQ"/>
    </source>
</evidence>
<keyword id="KW-0002">3D-structure</keyword>
<keyword id="KW-0175">Coiled coil</keyword>
<keyword id="KW-0217">Developmental protein</keyword>
<keyword id="KW-1185">Reference proteome</keyword>